<dbReference type="EMBL" id="CP000671">
    <property type="protein sequence ID" value="ABQ98393.1"/>
    <property type="molecule type" value="Genomic_DNA"/>
</dbReference>
<dbReference type="SMR" id="A5UC92"/>
<dbReference type="KEGG" id="hip:CGSHiEE_05010"/>
<dbReference type="HOGENOM" id="CLU_123265_0_1_6"/>
<dbReference type="GO" id="GO:1990904">
    <property type="term" value="C:ribonucleoprotein complex"/>
    <property type="evidence" value="ECO:0007669"/>
    <property type="project" value="UniProtKB-KW"/>
</dbReference>
<dbReference type="GO" id="GO:0005840">
    <property type="term" value="C:ribosome"/>
    <property type="evidence" value="ECO:0007669"/>
    <property type="project" value="UniProtKB-KW"/>
</dbReference>
<dbReference type="GO" id="GO:0019843">
    <property type="term" value="F:rRNA binding"/>
    <property type="evidence" value="ECO:0007669"/>
    <property type="project" value="UniProtKB-UniRule"/>
</dbReference>
<dbReference type="GO" id="GO:0003735">
    <property type="term" value="F:structural constituent of ribosome"/>
    <property type="evidence" value="ECO:0007669"/>
    <property type="project" value="InterPro"/>
</dbReference>
<dbReference type="GO" id="GO:0000027">
    <property type="term" value="P:ribosomal large subunit assembly"/>
    <property type="evidence" value="ECO:0007669"/>
    <property type="project" value="UniProtKB-UniRule"/>
</dbReference>
<dbReference type="GO" id="GO:0006412">
    <property type="term" value="P:translation"/>
    <property type="evidence" value="ECO:0007669"/>
    <property type="project" value="InterPro"/>
</dbReference>
<dbReference type="CDD" id="cd07026">
    <property type="entry name" value="Ribosomal_L20"/>
    <property type="match status" value="1"/>
</dbReference>
<dbReference type="FunFam" id="1.10.1900.20:FF:000001">
    <property type="entry name" value="50S ribosomal protein L20"/>
    <property type="match status" value="1"/>
</dbReference>
<dbReference type="Gene3D" id="6.10.160.10">
    <property type="match status" value="1"/>
</dbReference>
<dbReference type="Gene3D" id="1.10.1900.20">
    <property type="entry name" value="Ribosomal protein L20"/>
    <property type="match status" value="1"/>
</dbReference>
<dbReference type="HAMAP" id="MF_00382">
    <property type="entry name" value="Ribosomal_bL20"/>
    <property type="match status" value="1"/>
</dbReference>
<dbReference type="InterPro" id="IPR005813">
    <property type="entry name" value="Ribosomal_bL20"/>
</dbReference>
<dbReference type="InterPro" id="IPR049946">
    <property type="entry name" value="RIBOSOMAL_L20_CS"/>
</dbReference>
<dbReference type="InterPro" id="IPR035566">
    <property type="entry name" value="Ribosomal_protein_bL20_C"/>
</dbReference>
<dbReference type="NCBIfam" id="TIGR01032">
    <property type="entry name" value="rplT_bact"/>
    <property type="match status" value="1"/>
</dbReference>
<dbReference type="PANTHER" id="PTHR10986">
    <property type="entry name" value="39S RIBOSOMAL PROTEIN L20"/>
    <property type="match status" value="1"/>
</dbReference>
<dbReference type="Pfam" id="PF00453">
    <property type="entry name" value="Ribosomal_L20"/>
    <property type="match status" value="1"/>
</dbReference>
<dbReference type="PRINTS" id="PR00062">
    <property type="entry name" value="RIBOSOMALL20"/>
</dbReference>
<dbReference type="SUPFAM" id="SSF74731">
    <property type="entry name" value="Ribosomal protein L20"/>
    <property type="match status" value="1"/>
</dbReference>
<dbReference type="PROSITE" id="PS00937">
    <property type="entry name" value="RIBOSOMAL_L20"/>
    <property type="match status" value="1"/>
</dbReference>
<protein>
    <recommendedName>
        <fullName evidence="1">Large ribosomal subunit protein bL20</fullName>
    </recommendedName>
    <alternativeName>
        <fullName evidence="2">50S ribosomal protein L20</fullName>
    </alternativeName>
</protein>
<proteinExistence type="inferred from homology"/>
<name>RL20_HAEIE</name>
<evidence type="ECO:0000255" key="1">
    <source>
        <dbReference type="HAMAP-Rule" id="MF_00382"/>
    </source>
</evidence>
<evidence type="ECO:0000305" key="2"/>
<gene>
    <name evidence="1" type="primary">rplT</name>
    <name type="ordered locus">CGSHiEE_05010</name>
</gene>
<keyword id="KW-0687">Ribonucleoprotein</keyword>
<keyword id="KW-0689">Ribosomal protein</keyword>
<keyword id="KW-0694">RNA-binding</keyword>
<keyword id="KW-0699">rRNA-binding</keyword>
<organism>
    <name type="scientific">Haemophilus influenzae (strain PittEE)</name>
    <dbReference type="NCBI Taxonomy" id="374930"/>
    <lineage>
        <taxon>Bacteria</taxon>
        <taxon>Pseudomonadati</taxon>
        <taxon>Pseudomonadota</taxon>
        <taxon>Gammaproteobacteria</taxon>
        <taxon>Pasteurellales</taxon>
        <taxon>Pasteurellaceae</taxon>
        <taxon>Haemophilus</taxon>
    </lineage>
</organism>
<reference key="1">
    <citation type="journal article" date="2007" name="Genome Biol.">
        <title>Characterization and modeling of the Haemophilus influenzae core and supragenomes based on the complete genomic sequences of Rd and 12 clinical nontypeable strains.</title>
        <authorList>
            <person name="Hogg J.S."/>
            <person name="Hu F.Z."/>
            <person name="Janto B."/>
            <person name="Boissy R."/>
            <person name="Hayes J."/>
            <person name="Keefe R."/>
            <person name="Post J.C."/>
            <person name="Ehrlich G.D."/>
        </authorList>
    </citation>
    <scope>NUCLEOTIDE SEQUENCE [LARGE SCALE GENOMIC DNA]</scope>
    <source>
        <strain>PittEE</strain>
    </source>
</reference>
<feature type="chain" id="PRO_1000048987" description="Large ribosomal subunit protein bL20">
    <location>
        <begin position="1"/>
        <end position="117"/>
    </location>
</feature>
<comment type="function">
    <text evidence="1">Binds directly to 23S ribosomal RNA and is necessary for the in vitro assembly process of the 50S ribosomal subunit. It is not involved in the protein synthesizing functions of that subunit.</text>
</comment>
<comment type="similarity">
    <text evidence="1">Belongs to the bacterial ribosomal protein bL20 family.</text>
</comment>
<accession>A5UC92</accession>
<sequence length="117" mass="13341">MARVKRGVIARARHKKVLKAAKGYYGARSRVYRVAFQAVIKAGQYAYRDRRQRKRQFRQLWIARINAAARQNGLSYSKFINGLKKASVEIDRKILADIAVFDKVAFAALVEKAKSAL</sequence>